<feature type="chain" id="PRO_0000088771" description="NuA4 complex subunit EAF3 homolog">
    <location>
        <begin position="1"/>
        <end position="424"/>
    </location>
</feature>
<feature type="domain" description="Tudor-knot" evidence="1">
    <location>
        <begin position="23"/>
        <end position="73"/>
    </location>
</feature>
<feature type="domain" description="MRG" evidence="2">
    <location>
        <begin position="252"/>
        <end position="424"/>
    </location>
</feature>
<feature type="region of interest" description="Disordered" evidence="3">
    <location>
        <begin position="88"/>
        <end position="243"/>
    </location>
</feature>
<feature type="compositionally biased region" description="Basic residues" evidence="3">
    <location>
        <begin position="97"/>
        <end position="106"/>
    </location>
</feature>
<feature type="compositionally biased region" description="Basic and acidic residues" evidence="3">
    <location>
        <begin position="107"/>
        <end position="116"/>
    </location>
</feature>
<feature type="compositionally biased region" description="Low complexity" evidence="3">
    <location>
        <begin position="122"/>
        <end position="165"/>
    </location>
</feature>
<feature type="compositionally biased region" description="Low complexity" evidence="3">
    <location>
        <begin position="232"/>
        <end position="242"/>
    </location>
</feature>
<feature type="modified residue" description="Phosphoserine" evidence="5">
    <location>
        <position position="119"/>
    </location>
</feature>
<feature type="modified residue" description="Phosphothreonine" evidence="5">
    <location>
        <position position="175"/>
    </location>
</feature>
<feature type="modified residue" description="Phosphothreonine" evidence="5">
    <location>
        <position position="183"/>
    </location>
</feature>
<feature type="modified residue" description="Phosphothreonine" evidence="5">
    <location>
        <position position="196"/>
    </location>
</feature>
<feature type="modified residue" description="Phosphothreonine" evidence="5">
    <location>
        <position position="197"/>
    </location>
</feature>
<feature type="modified residue" description="Phosphoserine" evidence="5">
    <location>
        <position position="211"/>
    </location>
</feature>
<feature type="modified residue" description="Phosphothreonine" evidence="5">
    <location>
        <position position="235"/>
    </location>
</feature>
<feature type="strand" evidence="7">
    <location>
        <begin position="19"/>
        <end position="21"/>
    </location>
</feature>
<feature type="strand" evidence="7">
    <location>
        <begin position="27"/>
        <end position="31"/>
    </location>
</feature>
<feature type="strand" evidence="7">
    <location>
        <begin position="33"/>
        <end position="44"/>
    </location>
</feature>
<feature type="strand" evidence="7">
    <location>
        <begin position="47"/>
        <end position="50"/>
    </location>
</feature>
<feature type="strand" evidence="7">
    <location>
        <begin position="52"/>
        <end position="57"/>
    </location>
</feature>
<feature type="helix" evidence="7">
    <location>
        <begin position="62"/>
        <end position="64"/>
    </location>
</feature>
<feature type="strand" evidence="7">
    <location>
        <begin position="66"/>
        <end position="69"/>
    </location>
</feature>
<feature type="helix" evidence="7">
    <location>
        <begin position="70"/>
        <end position="72"/>
    </location>
</feature>
<feature type="helix" evidence="7">
    <location>
        <begin position="78"/>
        <end position="91"/>
    </location>
</feature>
<evidence type="ECO:0000255" key="1"/>
<evidence type="ECO:0000255" key="2">
    <source>
        <dbReference type="PROSITE-ProRule" id="PRU00972"/>
    </source>
</evidence>
<evidence type="ECO:0000256" key="3">
    <source>
        <dbReference type="SAM" id="MobiDB-lite"/>
    </source>
</evidence>
<evidence type="ECO:0000269" key="4">
    <source>
    </source>
</evidence>
<evidence type="ECO:0000269" key="5">
    <source>
    </source>
</evidence>
<evidence type="ECO:0000305" key="6"/>
<evidence type="ECO:0007829" key="7">
    <source>
        <dbReference type="PDB" id="2LRQ"/>
    </source>
</evidence>
<reference key="1">
    <citation type="journal article" date="2001" name="Gene">
        <title>Conservation of the MORF4 related gene family: identification of a new chromo domain subfamily and novel protein motif.</title>
        <authorList>
            <person name="Bertram M.J."/>
            <person name="Pereira-Smith O.M."/>
        </authorList>
    </citation>
    <scope>NUCLEOTIDE SEQUENCE [MRNA]</scope>
</reference>
<reference key="2">
    <citation type="journal article" date="2000" name="Science">
        <title>The genome sequence of Drosophila melanogaster.</title>
        <authorList>
            <person name="Adams M.D."/>
            <person name="Celniker S.E."/>
            <person name="Holt R.A."/>
            <person name="Evans C.A."/>
            <person name="Gocayne J.D."/>
            <person name="Amanatides P.G."/>
            <person name="Scherer S.E."/>
            <person name="Li P.W."/>
            <person name="Hoskins R.A."/>
            <person name="Galle R.F."/>
            <person name="George R.A."/>
            <person name="Lewis S.E."/>
            <person name="Richards S."/>
            <person name="Ashburner M."/>
            <person name="Henderson S.N."/>
            <person name="Sutton G.G."/>
            <person name="Wortman J.R."/>
            <person name="Yandell M.D."/>
            <person name="Zhang Q."/>
            <person name="Chen L.X."/>
            <person name="Brandon R.C."/>
            <person name="Rogers Y.-H.C."/>
            <person name="Blazej R.G."/>
            <person name="Champe M."/>
            <person name="Pfeiffer B.D."/>
            <person name="Wan K.H."/>
            <person name="Doyle C."/>
            <person name="Baxter E.G."/>
            <person name="Helt G."/>
            <person name="Nelson C.R."/>
            <person name="Miklos G.L.G."/>
            <person name="Abril J.F."/>
            <person name="Agbayani A."/>
            <person name="An H.-J."/>
            <person name="Andrews-Pfannkoch C."/>
            <person name="Baldwin D."/>
            <person name="Ballew R.M."/>
            <person name="Basu A."/>
            <person name="Baxendale J."/>
            <person name="Bayraktaroglu L."/>
            <person name="Beasley E.M."/>
            <person name="Beeson K.Y."/>
            <person name="Benos P.V."/>
            <person name="Berman B.P."/>
            <person name="Bhandari D."/>
            <person name="Bolshakov S."/>
            <person name="Borkova D."/>
            <person name="Botchan M.R."/>
            <person name="Bouck J."/>
            <person name="Brokstein P."/>
            <person name="Brottier P."/>
            <person name="Burtis K.C."/>
            <person name="Busam D.A."/>
            <person name="Butler H."/>
            <person name="Cadieu E."/>
            <person name="Center A."/>
            <person name="Chandra I."/>
            <person name="Cherry J.M."/>
            <person name="Cawley S."/>
            <person name="Dahlke C."/>
            <person name="Davenport L.B."/>
            <person name="Davies P."/>
            <person name="de Pablos B."/>
            <person name="Delcher A."/>
            <person name="Deng Z."/>
            <person name="Mays A.D."/>
            <person name="Dew I."/>
            <person name="Dietz S.M."/>
            <person name="Dodson K."/>
            <person name="Doup L.E."/>
            <person name="Downes M."/>
            <person name="Dugan-Rocha S."/>
            <person name="Dunkov B.C."/>
            <person name="Dunn P."/>
            <person name="Durbin K.J."/>
            <person name="Evangelista C.C."/>
            <person name="Ferraz C."/>
            <person name="Ferriera S."/>
            <person name="Fleischmann W."/>
            <person name="Fosler C."/>
            <person name="Gabrielian A.E."/>
            <person name="Garg N.S."/>
            <person name="Gelbart W.M."/>
            <person name="Glasser K."/>
            <person name="Glodek A."/>
            <person name="Gong F."/>
            <person name="Gorrell J.H."/>
            <person name="Gu Z."/>
            <person name="Guan P."/>
            <person name="Harris M."/>
            <person name="Harris N.L."/>
            <person name="Harvey D.A."/>
            <person name="Heiman T.J."/>
            <person name="Hernandez J.R."/>
            <person name="Houck J."/>
            <person name="Hostin D."/>
            <person name="Houston K.A."/>
            <person name="Howland T.J."/>
            <person name="Wei M.-H."/>
            <person name="Ibegwam C."/>
            <person name="Jalali M."/>
            <person name="Kalush F."/>
            <person name="Karpen G.H."/>
            <person name="Ke Z."/>
            <person name="Kennison J.A."/>
            <person name="Ketchum K.A."/>
            <person name="Kimmel B.E."/>
            <person name="Kodira C.D."/>
            <person name="Kraft C.L."/>
            <person name="Kravitz S."/>
            <person name="Kulp D."/>
            <person name="Lai Z."/>
            <person name="Lasko P."/>
            <person name="Lei Y."/>
            <person name="Levitsky A.A."/>
            <person name="Li J.H."/>
            <person name="Li Z."/>
            <person name="Liang Y."/>
            <person name="Lin X."/>
            <person name="Liu X."/>
            <person name="Mattei B."/>
            <person name="McIntosh T.C."/>
            <person name="McLeod M.P."/>
            <person name="McPherson D."/>
            <person name="Merkulov G."/>
            <person name="Milshina N.V."/>
            <person name="Mobarry C."/>
            <person name="Morris J."/>
            <person name="Moshrefi A."/>
            <person name="Mount S.M."/>
            <person name="Moy M."/>
            <person name="Murphy B."/>
            <person name="Murphy L."/>
            <person name="Muzny D.M."/>
            <person name="Nelson D.L."/>
            <person name="Nelson D.R."/>
            <person name="Nelson K.A."/>
            <person name="Nixon K."/>
            <person name="Nusskern D.R."/>
            <person name="Pacleb J.M."/>
            <person name="Palazzolo M."/>
            <person name="Pittman G.S."/>
            <person name="Pan S."/>
            <person name="Pollard J."/>
            <person name="Puri V."/>
            <person name="Reese M.G."/>
            <person name="Reinert K."/>
            <person name="Remington K."/>
            <person name="Saunders R.D.C."/>
            <person name="Scheeler F."/>
            <person name="Shen H."/>
            <person name="Shue B.C."/>
            <person name="Siden-Kiamos I."/>
            <person name="Simpson M."/>
            <person name="Skupski M.P."/>
            <person name="Smith T.J."/>
            <person name="Spier E."/>
            <person name="Spradling A.C."/>
            <person name="Stapleton M."/>
            <person name="Strong R."/>
            <person name="Sun E."/>
            <person name="Svirskas R."/>
            <person name="Tector C."/>
            <person name="Turner R."/>
            <person name="Venter E."/>
            <person name="Wang A.H."/>
            <person name="Wang X."/>
            <person name="Wang Z.-Y."/>
            <person name="Wassarman D.A."/>
            <person name="Weinstock G.M."/>
            <person name="Weissenbach J."/>
            <person name="Williams S.M."/>
            <person name="Woodage T."/>
            <person name="Worley K.C."/>
            <person name="Wu D."/>
            <person name="Yang S."/>
            <person name="Yao Q.A."/>
            <person name="Ye J."/>
            <person name="Yeh R.-F."/>
            <person name="Zaveri J.S."/>
            <person name="Zhan M."/>
            <person name="Zhang G."/>
            <person name="Zhao Q."/>
            <person name="Zheng L."/>
            <person name="Zheng X.H."/>
            <person name="Zhong F.N."/>
            <person name="Zhong W."/>
            <person name="Zhou X."/>
            <person name="Zhu S.C."/>
            <person name="Zhu X."/>
            <person name="Smith H.O."/>
            <person name="Gibbs R.A."/>
            <person name="Myers E.W."/>
            <person name="Rubin G.M."/>
            <person name="Venter J.C."/>
        </authorList>
    </citation>
    <scope>NUCLEOTIDE SEQUENCE [LARGE SCALE GENOMIC DNA]</scope>
    <source>
        <strain>Berkeley</strain>
    </source>
</reference>
<reference key="3">
    <citation type="journal article" date="2002" name="Genome Biol.">
        <title>Annotation of the Drosophila melanogaster euchromatic genome: a systematic review.</title>
        <authorList>
            <person name="Misra S."/>
            <person name="Crosby M.A."/>
            <person name="Mungall C.J."/>
            <person name="Matthews B.B."/>
            <person name="Campbell K.S."/>
            <person name="Hradecky P."/>
            <person name="Huang Y."/>
            <person name="Kaminker J.S."/>
            <person name="Millburn G.H."/>
            <person name="Prochnik S.E."/>
            <person name="Smith C.D."/>
            <person name="Tupy J.L."/>
            <person name="Whitfield E.J."/>
            <person name="Bayraktaroglu L."/>
            <person name="Berman B.P."/>
            <person name="Bettencourt B.R."/>
            <person name="Celniker S.E."/>
            <person name="de Grey A.D.N.J."/>
            <person name="Drysdale R.A."/>
            <person name="Harris N.L."/>
            <person name="Richter J."/>
            <person name="Russo S."/>
            <person name="Schroeder A.J."/>
            <person name="Shu S.Q."/>
            <person name="Stapleton M."/>
            <person name="Yamada C."/>
            <person name="Ashburner M."/>
            <person name="Gelbart W.M."/>
            <person name="Rubin G.M."/>
            <person name="Lewis S.E."/>
        </authorList>
    </citation>
    <scope>GENOME REANNOTATION</scope>
    <source>
        <strain>Berkeley</strain>
    </source>
</reference>
<reference key="4">
    <citation type="journal article" date="2002" name="Genome Biol.">
        <title>A Drosophila full-length cDNA resource.</title>
        <authorList>
            <person name="Stapleton M."/>
            <person name="Carlson J.W."/>
            <person name="Brokstein P."/>
            <person name="Yu C."/>
            <person name="Champe M."/>
            <person name="George R.A."/>
            <person name="Guarin H."/>
            <person name="Kronmiller B."/>
            <person name="Pacleb J.M."/>
            <person name="Park S."/>
            <person name="Wan K.H."/>
            <person name="Rubin G.M."/>
            <person name="Celniker S.E."/>
        </authorList>
    </citation>
    <scope>NUCLEOTIDE SEQUENCE [LARGE SCALE MRNA]</scope>
    <source>
        <strain>Berkeley</strain>
        <tissue>Embryo</tissue>
    </source>
</reference>
<reference key="5">
    <citation type="journal article" date="2004" name="Science">
        <title>Acetylation by Tip60 is required for selective histone variant exchange at DNA lesions.</title>
        <authorList>
            <person name="Kusch T."/>
            <person name="Florens L."/>
            <person name="Macdonald W.H."/>
            <person name="Swanson S.K."/>
            <person name="Glaser R.L."/>
            <person name="Yates J.R. III"/>
            <person name="Abmayr S.M."/>
            <person name="Washburn M.P."/>
            <person name="Workman J.L."/>
        </authorList>
    </citation>
    <scope>IDENTIFICATION IN THE TIP60 COMPLEX</scope>
    <scope>FUNCTION</scope>
</reference>
<reference key="6">
    <citation type="journal article" date="2008" name="J. Proteome Res.">
        <title>Phosphoproteome analysis of Drosophila melanogaster embryos.</title>
        <authorList>
            <person name="Zhai B."/>
            <person name="Villen J."/>
            <person name="Beausoleil S.A."/>
            <person name="Mintseris J."/>
            <person name="Gygi S.P."/>
        </authorList>
    </citation>
    <scope>PHOSPHORYLATION [LARGE SCALE ANALYSIS] AT SER-119; THR-175; THR-183; THR-196; THR-197; SER-211 AND THR-235</scope>
    <scope>IDENTIFICATION BY MASS SPECTROMETRY</scope>
    <source>
        <tissue>Embryo</tissue>
    </source>
</reference>
<gene>
    <name type="primary">MRG15</name>
    <name type="ORF">CG6363</name>
</gene>
<accession>Q9Y0I1</accession>
<accession>Q9VF99</accession>
<comment type="function">
    <text evidence="4">Part of the Tip60 chromatin-remodeling complex which is involved in DNA repair. Upon induction of DNA double-strand breaks, this complex acetylates phosphorylated H2AV in nucleosomes and exchanges it with unmodified H2AV.</text>
</comment>
<comment type="subunit">
    <text evidence="4">Component of the Tip60 chromatin-remodeling complex which contains the catalytic subunit Tip60 and the subunits Domino, Tra1, Brd8, E(Pc), DMAP1, Pontin, Reptin, Ing3, Act87E, BAP55, Mrg15, MrgBP, Gas41 and YL-1.</text>
</comment>
<comment type="subcellular location">
    <subcellularLocation>
        <location evidence="6">Nucleus</location>
    </subcellularLocation>
</comment>
<sequence length="424" mass="47194">MGEVKPAKVENYSTGTDANTLFVDGERVLCFHGPLIYEAKVLKTKPDATPVEYYIHYAGWSKNWDEWVPENRVLKYNDDNVKRRQELARQCGERSKKDNKKGSAKAKKMEQMRNESRASTPSKDSNTSQSTASSTPTTSAGPGSKSEAGSTGTTTTNSTANSTTSRAHRKSTQSTPSTARPGTPSDKKEDPAAAETTEEEGPVAPKKKRMSEQRPSLTGSDVAEKPLPPTTTPSTPTTEPAPCVESEEAYAAKVEVKIKIPDELKHYLTDDWYAVVREHKLLELPAKVTVQQISEQYLAHKKSVKSTSASKEVAINDVLDGIVEYFNVMLGSQLLYKFERTQYADVMQKHPDTPLSELYGSFHLLRLFVRLGSMLSYSALDQQSMQNLLTHVQDFLKFLVKNSSIFFSMSNFINVDPEYVRNAQ</sequence>
<dbReference type="EMBL" id="AF152245">
    <property type="protein sequence ID" value="AAD38047.1"/>
    <property type="molecule type" value="mRNA"/>
</dbReference>
<dbReference type="EMBL" id="AE014297">
    <property type="protein sequence ID" value="AAF55161.1"/>
    <property type="molecule type" value="Genomic_DNA"/>
</dbReference>
<dbReference type="EMBL" id="AY051679">
    <property type="protein sequence ID" value="AAK93103.1"/>
    <property type="molecule type" value="mRNA"/>
</dbReference>
<dbReference type="RefSeq" id="NP_650442.1">
    <property type="nucleotide sequence ID" value="NM_142185.2"/>
</dbReference>
<dbReference type="PDB" id="2LRQ">
    <property type="method" value="NMR"/>
    <property type="chains" value="A=11-94"/>
</dbReference>
<dbReference type="PDBsum" id="2LRQ"/>
<dbReference type="SMR" id="Q9Y0I1"/>
<dbReference type="BioGRID" id="66914">
    <property type="interactions" value="41"/>
</dbReference>
<dbReference type="ComplexPortal" id="CPX-2264">
    <property type="entry name" value="NuA4 histone acetyltransferase complex"/>
</dbReference>
<dbReference type="ComplexPortal" id="CPX-2423">
    <property type="entry name" value="SWR1 chromatin remodelling complex"/>
</dbReference>
<dbReference type="DIP" id="DIP-20132N"/>
<dbReference type="FunCoup" id="Q9Y0I1">
    <property type="interactions" value="1677"/>
</dbReference>
<dbReference type="IntAct" id="Q9Y0I1">
    <property type="interactions" value="21"/>
</dbReference>
<dbReference type="STRING" id="7227.FBpp0306049"/>
<dbReference type="GlyGen" id="Q9Y0I1">
    <property type="glycosylation" value="3 sites"/>
</dbReference>
<dbReference type="iPTMnet" id="Q9Y0I1"/>
<dbReference type="PaxDb" id="7227-FBpp0306049"/>
<dbReference type="DNASU" id="41850"/>
<dbReference type="EnsemblMetazoa" id="FBtr0083125">
    <property type="protein sequence ID" value="FBpp0082579"/>
    <property type="gene ID" value="FBgn0027378"/>
</dbReference>
<dbReference type="GeneID" id="41850"/>
<dbReference type="KEGG" id="dme:Dmel_CG6363"/>
<dbReference type="UCSC" id="CG6363-RA">
    <property type="organism name" value="d. melanogaster"/>
</dbReference>
<dbReference type="AGR" id="FB:FBgn0027378"/>
<dbReference type="CTD" id="41850"/>
<dbReference type="FlyBase" id="FBgn0027378">
    <property type="gene designation" value="MRG15"/>
</dbReference>
<dbReference type="VEuPathDB" id="VectorBase:FBgn0027378"/>
<dbReference type="eggNOG" id="KOG3001">
    <property type="taxonomic scope" value="Eukaryota"/>
</dbReference>
<dbReference type="GeneTree" id="ENSGT00950000182965"/>
<dbReference type="HOGENOM" id="CLU_039566_4_0_1"/>
<dbReference type="InParanoid" id="Q9Y0I1"/>
<dbReference type="OrthoDB" id="124855at2759"/>
<dbReference type="PhylomeDB" id="Q9Y0I1"/>
<dbReference type="SignaLink" id="Q9Y0I1"/>
<dbReference type="BioGRID-ORCS" id="41850">
    <property type="hits" value="1 hit in 3 CRISPR screens"/>
</dbReference>
<dbReference type="EvolutionaryTrace" id="Q9Y0I1"/>
<dbReference type="GenomeRNAi" id="41850"/>
<dbReference type="PRO" id="PR:Q9Y0I1"/>
<dbReference type="Proteomes" id="UP000000803">
    <property type="component" value="Chromosome 3R"/>
</dbReference>
<dbReference type="Bgee" id="FBgn0027378">
    <property type="expression patterns" value="Expressed in eye disc (Drosophila) and 104 other cell types or tissues"/>
</dbReference>
<dbReference type="ExpressionAtlas" id="Q9Y0I1">
    <property type="expression patterns" value="baseline and differential"/>
</dbReference>
<dbReference type="GO" id="GO:0000123">
    <property type="term" value="C:histone acetyltransferase complex"/>
    <property type="evidence" value="ECO:0000353"/>
    <property type="project" value="FlyBase"/>
</dbReference>
<dbReference type="GO" id="GO:0035097">
    <property type="term" value="C:histone methyltransferase complex"/>
    <property type="evidence" value="ECO:0000353"/>
    <property type="project" value="FlyBase"/>
</dbReference>
<dbReference type="GO" id="GO:0035267">
    <property type="term" value="C:NuA4 histone acetyltransferase complex"/>
    <property type="evidence" value="ECO:0000314"/>
    <property type="project" value="UniProtKB"/>
</dbReference>
<dbReference type="GO" id="GO:0005634">
    <property type="term" value="C:nucleus"/>
    <property type="evidence" value="ECO:0000314"/>
    <property type="project" value="FlyBase"/>
</dbReference>
<dbReference type="GO" id="GO:0003682">
    <property type="term" value="F:chromatin binding"/>
    <property type="evidence" value="ECO:0000314"/>
    <property type="project" value="FlyBase"/>
</dbReference>
<dbReference type="GO" id="GO:0030234">
    <property type="term" value="F:enzyme regulator activity"/>
    <property type="evidence" value="ECO:0000314"/>
    <property type="project" value="FlyBase"/>
</dbReference>
<dbReference type="GO" id="GO:0035064">
    <property type="term" value="F:methylated histone binding"/>
    <property type="evidence" value="ECO:0000314"/>
    <property type="project" value="FlyBase"/>
</dbReference>
<dbReference type="GO" id="GO:0051276">
    <property type="term" value="P:chromosome organization"/>
    <property type="evidence" value="ECO:0000315"/>
    <property type="project" value="FlyBase"/>
</dbReference>
<dbReference type="GO" id="GO:0051304">
    <property type="term" value="P:chromosome separation"/>
    <property type="evidence" value="ECO:0000315"/>
    <property type="project" value="FlyBase"/>
</dbReference>
<dbReference type="GO" id="GO:0006281">
    <property type="term" value="P:DNA repair"/>
    <property type="evidence" value="ECO:0007669"/>
    <property type="project" value="UniProtKB-KW"/>
</dbReference>
<dbReference type="GO" id="GO:0140861">
    <property type="term" value="P:DNA repair-dependent chromatin remodeling"/>
    <property type="evidence" value="ECO:0000314"/>
    <property type="project" value="FlyBase"/>
</dbReference>
<dbReference type="GO" id="GO:0031507">
    <property type="term" value="P:heterochromatin formation"/>
    <property type="evidence" value="ECO:0000315"/>
    <property type="project" value="FlyBase"/>
</dbReference>
<dbReference type="GO" id="GO:0010628">
    <property type="term" value="P:positive regulation of gene expression"/>
    <property type="evidence" value="ECO:0000316"/>
    <property type="project" value="FlyBase"/>
</dbReference>
<dbReference type="GO" id="GO:0006355">
    <property type="term" value="P:regulation of DNA-templated transcription"/>
    <property type="evidence" value="ECO:0007669"/>
    <property type="project" value="InterPro"/>
</dbReference>
<dbReference type="CDD" id="cd18983">
    <property type="entry name" value="CBD_MSL3_like"/>
    <property type="match status" value="1"/>
</dbReference>
<dbReference type="FunFam" id="1.10.274.30:FF:000001">
    <property type="entry name" value="Mortality factor 4-like protein 1"/>
    <property type="match status" value="1"/>
</dbReference>
<dbReference type="FunFam" id="2.30.30.140:FF:000129">
    <property type="entry name" value="NuA4 complex subunit EAF3 homolog"/>
    <property type="match status" value="1"/>
</dbReference>
<dbReference type="Gene3D" id="2.30.30.140">
    <property type="match status" value="1"/>
</dbReference>
<dbReference type="Gene3D" id="1.10.274.30">
    <property type="entry name" value="MRG domain"/>
    <property type="match status" value="1"/>
</dbReference>
<dbReference type="InterPro" id="IPR016197">
    <property type="entry name" value="Chromo-like_dom_sf"/>
</dbReference>
<dbReference type="InterPro" id="IPR000953">
    <property type="entry name" value="Chromo/chromo_shadow_dom"/>
</dbReference>
<dbReference type="InterPro" id="IPR008676">
    <property type="entry name" value="MRG"/>
</dbReference>
<dbReference type="InterPro" id="IPR038217">
    <property type="entry name" value="MRG_C_sf"/>
</dbReference>
<dbReference type="InterPro" id="IPR026541">
    <property type="entry name" value="MRG_dom"/>
</dbReference>
<dbReference type="InterPro" id="IPR025995">
    <property type="entry name" value="Tudor-knot"/>
</dbReference>
<dbReference type="PANTHER" id="PTHR10880:SF48">
    <property type="entry name" value="MORTALITY FACTOR 4 LIKE 2"/>
    <property type="match status" value="1"/>
</dbReference>
<dbReference type="PANTHER" id="PTHR10880">
    <property type="entry name" value="MORTALITY FACTOR 4-LIKE PROTEIN"/>
    <property type="match status" value="1"/>
</dbReference>
<dbReference type="Pfam" id="PF05712">
    <property type="entry name" value="MRG"/>
    <property type="match status" value="1"/>
</dbReference>
<dbReference type="Pfam" id="PF11717">
    <property type="entry name" value="Tudor-knot"/>
    <property type="match status" value="1"/>
</dbReference>
<dbReference type="SMART" id="SM00298">
    <property type="entry name" value="CHROMO"/>
    <property type="match status" value="1"/>
</dbReference>
<dbReference type="SUPFAM" id="SSF54160">
    <property type="entry name" value="Chromo domain-like"/>
    <property type="match status" value="1"/>
</dbReference>
<dbReference type="PROSITE" id="PS51640">
    <property type="entry name" value="MRG"/>
    <property type="match status" value="1"/>
</dbReference>
<name>EAF3_DROME</name>
<protein>
    <recommendedName>
        <fullName>NuA4 complex subunit EAF3 homolog</fullName>
    </recommendedName>
    <alternativeName>
        <fullName>Protein MRG15</fullName>
    </alternativeName>
</protein>
<keyword id="KW-0002">3D-structure</keyword>
<keyword id="KW-0156">Chromatin regulator</keyword>
<keyword id="KW-0227">DNA damage</keyword>
<keyword id="KW-0234">DNA repair</keyword>
<keyword id="KW-0539">Nucleus</keyword>
<keyword id="KW-0597">Phosphoprotein</keyword>
<keyword id="KW-1185">Reference proteome</keyword>
<keyword id="KW-0804">Transcription</keyword>
<keyword id="KW-0805">Transcription regulation</keyword>
<organism>
    <name type="scientific">Drosophila melanogaster</name>
    <name type="common">Fruit fly</name>
    <dbReference type="NCBI Taxonomy" id="7227"/>
    <lineage>
        <taxon>Eukaryota</taxon>
        <taxon>Metazoa</taxon>
        <taxon>Ecdysozoa</taxon>
        <taxon>Arthropoda</taxon>
        <taxon>Hexapoda</taxon>
        <taxon>Insecta</taxon>
        <taxon>Pterygota</taxon>
        <taxon>Neoptera</taxon>
        <taxon>Endopterygota</taxon>
        <taxon>Diptera</taxon>
        <taxon>Brachycera</taxon>
        <taxon>Muscomorpha</taxon>
        <taxon>Ephydroidea</taxon>
        <taxon>Drosophilidae</taxon>
        <taxon>Drosophila</taxon>
        <taxon>Sophophora</taxon>
    </lineage>
</organism>
<proteinExistence type="evidence at protein level"/>